<gene>
    <name evidence="1" type="primary">rpl7ae</name>
    <name type="synonym">rphS6</name>
    <name type="ordered locus">VNG_1157G</name>
</gene>
<feature type="chain" id="PRO_0000136791" description="Large ribosomal subunit protein eL8">
    <location>
        <begin position="1"/>
        <end position="120"/>
    </location>
</feature>
<reference key="1">
    <citation type="journal article" date="2000" name="Proc. Natl. Acad. Sci. U.S.A.">
        <title>Genome sequence of Halobacterium species NRC-1.</title>
        <authorList>
            <person name="Ng W.V."/>
            <person name="Kennedy S.P."/>
            <person name="Mahairas G.G."/>
            <person name="Berquist B."/>
            <person name="Pan M."/>
            <person name="Shukla H.D."/>
            <person name="Lasky S.R."/>
            <person name="Baliga N.S."/>
            <person name="Thorsson V."/>
            <person name="Sbrogna J."/>
            <person name="Swartzell S."/>
            <person name="Weir D."/>
            <person name="Hall J."/>
            <person name="Dahl T.A."/>
            <person name="Welti R."/>
            <person name="Goo Y.A."/>
            <person name="Leithauser B."/>
            <person name="Keller K."/>
            <person name="Cruz R."/>
            <person name="Danson M.J."/>
            <person name="Hough D.W."/>
            <person name="Maddocks D.G."/>
            <person name="Jablonski P.E."/>
            <person name="Krebs M.P."/>
            <person name="Angevine C.M."/>
            <person name="Dale H."/>
            <person name="Isenbarger T.A."/>
            <person name="Peck R.F."/>
            <person name="Pohlschroder M."/>
            <person name="Spudich J.L."/>
            <person name="Jung K.-H."/>
            <person name="Alam M."/>
            <person name="Freitas T."/>
            <person name="Hou S."/>
            <person name="Daniels C.J."/>
            <person name="Dennis P.P."/>
            <person name="Omer A.D."/>
            <person name="Ebhardt H."/>
            <person name="Lowe T.M."/>
            <person name="Liang P."/>
            <person name="Riley M."/>
            <person name="Hood L."/>
            <person name="DasSarma S."/>
        </authorList>
    </citation>
    <scope>NUCLEOTIDE SEQUENCE [LARGE SCALE GENOMIC DNA]</scope>
    <source>
        <strain>ATCC 700922 / JCM 11081 / NRC-1</strain>
    </source>
</reference>
<name>RL7A_HALSA</name>
<dbReference type="EMBL" id="AE004437">
    <property type="protein sequence ID" value="AAG19537.1"/>
    <property type="molecule type" value="Genomic_DNA"/>
</dbReference>
<dbReference type="PIR" id="E84271">
    <property type="entry name" value="E84271"/>
</dbReference>
<dbReference type="RefSeq" id="WP_010902832.1">
    <property type="nucleotide sequence ID" value="NC_002607.1"/>
</dbReference>
<dbReference type="SMR" id="Q9HQH8"/>
<dbReference type="FunCoup" id="Q9HQH8">
    <property type="interactions" value="139"/>
</dbReference>
<dbReference type="STRING" id="64091.VNG_1157G"/>
<dbReference type="PaxDb" id="64091-VNG_1157G"/>
<dbReference type="GeneID" id="89349513"/>
<dbReference type="KEGG" id="hal:VNG_1157G"/>
<dbReference type="PATRIC" id="fig|64091.14.peg.884"/>
<dbReference type="HOGENOM" id="CLU_084513_4_0_2"/>
<dbReference type="InParanoid" id="Q9HQH8"/>
<dbReference type="OrthoDB" id="25810at2157"/>
<dbReference type="PhylomeDB" id="Q9HQH8"/>
<dbReference type="Proteomes" id="UP000000554">
    <property type="component" value="Chromosome"/>
</dbReference>
<dbReference type="GO" id="GO:0005737">
    <property type="term" value="C:cytoplasm"/>
    <property type="evidence" value="ECO:0007669"/>
    <property type="project" value="UniProtKB-SubCell"/>
</dbReference>
<dbReference type="GO" id="GO:1990904">
    <property type="term" value="C:ribonucleoprotein complex"/>
    <property type="evidence" value="ECO:0007669"/>
    <property type="project" value="UniProtKB-KW"/>
</dbReference>
<dbReference type="GO" id="GO:0005840">
    <property type="term" value="C:ribosome"/>
    <property type="evidence" value="ECO:0007669"/>
    <property type="project" value="UniProtKB-KW"/>
</dbReference>
<dbReference type="GO" id="GO:0004526">
    <property type="term" value="F:ribonuclease P activity"/>
    <property type="evidence" value="ECO:0007669"/>
    <property type="project" value="UniProtKB-UniRule"/>
</dbReference>
<dbReference type="GO" id="GO:0019843">
    <property type="term" value="F:rRNA binding"/>
    <property type="evidence" value="ECO:0007669"/>
    <property type="project" value="UniProtKB-KW"/>
</dbReference>
<dbReference type="GO" id="GO:0003735">
    <property type="term" value="F:structural constituent of ribosome"/>
    <property type="evidence" value="ECO:0007669"/>
    <property type="project" value="InterPro"/>
</dbReference>
<dbReference type="GO" id="GO:1990145">
    <property type="term" value="P:maintenance of translational fidelity"/>
    <property type="evidence" value="ECO:0000318"/>
    <property type="project" value="GO_Central"/>
</dbReference>
<dbReference type="GO" id="GO:0042274">
    <property type="term" value="P:ribosomal small subunit biogenesis"/>
    <property type="evidence" value="ECO:0000318"/>
    <property type="project" value="GO_Central"/>
</dbReference>
<dbReference type="GO" id="GO:0001682">
    <property type="term" value="P:tRNA 5'-leader removal"/>
    <property type="evidence" value="ECO:0007669"/>
    <property type="project" value="UniProtKB-UniRule"/>
</dbReference>
<dbReference type="FunFam" id="3.30.1330.30:FF:000020">
    <property type="entry name" value="50S ribosomal protein L7Ae"/>
    <property type="match status" value="1"/>
</dbReference>
<dbReference type="Gene3D" id="3.30.1330.30">
    <property type="match status" value="1"/>
</dbReference>
<dbReference type="HAMAP" id="MF_00326">
    <property type="entry name" value="Ribosomal_eL8"/>
    <property type="match status" value="1"/>
</dbReference>
<dbReference type="InterPro" id="IPR029064">
    <property type="entry name" value="Ribosomal_eL30-like_sf"/>
</dbReference>
<dbReference type="InterPro" id="IPR004038">
    <property type="entry name" value="Ribosomal_eL8/eL30/eS12/Gad45"/>
</dbReference>
<dbReference type="InterPro" id="IPR018492">
    <property type="entry name" value="Ribosomal_eL8/Nhp2"/>
</dbReference>
<dbReference type="InterPro" id="IPR022481">
    <property type="entry name" value="Ribosomal_eL8_arc"/>
</dbReference>
<dbReference type="NCBIfam" id="TIGR03677">
    <property type="entry name" value="eL8_ribo"/>
    <property type="match status" value="1"/>
</dbReference>
<dbReference type="PANTHER" id="PTHR11843">
    <property type="entry name" value="40S RIBOSOMAL PROTEIN S12"/>
    <property type="match status" value="1"/>
</dbReference>
<dbReference type="Pfam" id="PF01248">
    <property type="entry name" value="Ribosomal_L7Ae"/>
    <property type="match status" value="1"/>
</dbReference>
<dbReference type="PRINTS" id="PR00881">
    <property type="entry name" value="L7ARS6FAMILY"/>
</dbReference>
<dbReference type="PRINTS" id="PR00884">
    <property type="entry name" value="RIBOSOMALHS6"/>
</dbReference>
<dbReference type="SUPFAM" id="SSF55315">
    <property type="entry name" value="L30e-like"/>
    <property type="match status" value="1"/>
</dbReference>
<evidence type="ECO:0000255" key="1">
    <source>
        <dbReference type="HAMAP-Rule" id="MF_00326"/>
    </source>
</evidence>
<evidence type="ECO:0000305" key="2"/>
<protein>
    <recommendedName>
        <fullName evidence="1">Large ribosomal subunit protein eL8</fullName>
    </recommendedName>
    <alternativeName>
        <fullName evidence="2">50S ribosomal protein L7Ae</fullName>
    </alternativeName>
    <alternativeName>
        <fullName evidence="1">Ribosomal protein L8e</fullName>
    </alternativeName>
</protein>
<organism>
    <name type="scientific">Halobacterium salinarum (strain ATCC 700922 / JCM 11081 / NRC-1)</name>
    <name type="common">Halobacterium halobium</name>
    <dbReference type="NCBI Taxonomy" id="64091"/>
    <lineage>
        <taxon>Archaea</taxon>
        <taxon>Methanobacteriati</taxon>
        <taxon>Methanobacteriota</taxon>
        <taxon>Stenosarchaea group</taxon>
        <taxon>Halobacteria</taxon>
        <taxon>Halobacteriales</taxon>
        <taxon>Halobacteriaceae</taxon>
        <taxon>Halobacterium</taxon>
        <taxon>Halobacterium salinarum NRC-34001</taxon>
    </lineage>
</organism>
<keyword id="KW-0963">Cytoplasm</keyword>
<keyword id="KW-1185">Reference proteome</keyword>
<keyword id="KW-0687">Ribonucleoprotein</keyword>
<keyword id="KW-0689">Ribosomal protein</keyword>
<keyword id="KW-0694">RNA-binding</keyword>
<keyword id="KW-0699">rRNA-binding</keyword>
<keyword id="KW-0819">tRNA processing</keyword>
<comment type="function">
    <text evidence="1">Multifunctional RNA-binding protein that recognizes the K-turn motif in ribosomal RNA, the RNA component of RNase P, box H/ACA, box C/D and box C'/D' sRNAs.</text>
</comment>
<comment type="subunit">
    <text evidence="1">Part of the 50S ribosomal subunit. Probably part of the RNase P complex.</text>
</comment>
<comment type="subcellular location">
    <subcellularLocation>
        <location evidence="1">Cytoplasm</location>
    </subcellularLocation>
</comment>
<comment type="similarity">
    <text evidence="1">Belongs to the eukaryotic ribosomal protein eL8 family.</text>
</comment>
<proteinExistence type="inferred from homology"/>
<accession>Q9HQH8</accession>
<sequence length="120" mass="12730">MPVYVDYDVPADLQERALESLEVARDTGSVKKGTNETTKAIERGNADIVFVAEDVSPEEIVMHLPELAAEKGIEVVFVETQDELGNAAGLEVGSAAAAVVAAGDAEDEIEDISTKVEDLQ</sequence>